<sequence length="2009" mass="228800">MEQTVLVPPGPDSFNFFTRESLAAIERRIAEEKAKNPKPDKKDDDENGPKPNSDLEAGKNLPFIYGDIPPEMVSEPLEDLDPYYINKKTFIVLNKGKAIFRFSATSALYILTPFNPLRKIAIKILVHSLFSMLIMCTILTNCVFMTMSNPPDWTKNVEYTFTGIYTFESLIKIIARGFCLEDFTFLRDPWNWLDFTVITFAYVTEFVDLGNVSALRTFRVLRALKTISVIPGLKTIVGALIQSVKKLSDVMILTVFCLSVFALIGLQLFMGNLRNKCVQWPPTNASLEEHSIEKNITMDYNGTLVNETVFEFDWKSYIQDSRYHYFLEGVLDALLCGNSSDAGQCPEGYMCVKAGRNPNYGYTSFDTFSWAFLSLFRLMTQDFWENLYQLTLRAAGKTYMIFFVLVIFLGSFYLINLILAVVAMAYEEQNQATLEEAEQKEAEFQQMLEQLKKQQEAAQQAAATTASEHSREPSAAGRLSDSSSEASKLSSKSAKERRNRRKKRKQKEQSGGEEKDDDEFHKSESEDSIRRKGFRFSIEGNRLTYEKRYSSPHQSLLSIRGSLFSPRRNSRTSLFSFRGRAKDVGSENDFADDEHSTFEDNESRRDSLFVPRRHGERRNSNLSQTSRSSRMLAVFPANGKMHSTVDCNGVVSLVGGPSVPTSPVGQLLPEVIIDKPATDDNGTTTETEMRKRRSSSFHVSMDFLEDPSQRQRAMSIASILTNTVEELEESRQKCPPCWYKFSNIFLIWDCSPYWLKVKHIVNLVVMDPFVDLAITICIVLNTLFMAMEHYPMTEHFNHVLTVGNLVFTGIFTAEMFLKIIAMDPYYYFQEGWNIFDGFIVTLSLVELGLANVEGLSVLRSFRLLRVFKLAKSWPTLNMLIKIIGNSVGALGNLTLVLAIIVFIFAVVGMQLFGKSYKDCVCKIATDCKLPRWHMNDFFHSFLIVFRVLCGEWIETMWDCMEVAGQAMCLTVFMMVMVIGNLVVLNLFLALLLSSFSADNLAATDDDNEMNNLQIAVDRMHKGIAYVKRKIYEFIQQSFVKKQKILDEIKPLDDLNNRKDNCISNHTTEIGKDLDCLKDVNGTTSGIGTGSSVEKYIIDESDYMSFINNPSLTVTVPIAVGESDFENLNTEDFSSESDLEESKEKLNESSSSSEGSTVDIGAPAEEQPVIEPEETLEPEACFTEGCVQRFKCCQISVEEGRGKQWWNLRRTCFRIVEHNWFETFIVFMILLSSGALAFEDIYIDQRKTIKTMLEYADKVFTYIFILEMLLKWVAYGYQTYFTNAWCWLDFLIVDVSLVSLTANALGYSELGAIKSLRTLRALRPLRALSRFEGMRVVVNALLGAIPSIMNVLLVCLIFWLIFSIMGVNLFAGKFYHCVNTTTGDIFEISEVNNHSDCLKLIERNETARWKNVKVNFDNVGFGYLSLLQVATFKGWMDIMYAAVDSRNVELQPKYEESLYMYLYFVIFIIFGSFFTLNLFIGVIIDNFNQQKKKFGGQDIFMTEEQKKYYNAMKKLGSKKPQKPIPRPGNKFQGMVFDFVTRQVFDISIMILICLNMVTMMVETDDQSDYVTSILSRINLVFIVLFTGECVLKLISLRHYYFTIGWNIFDFVVVILSIVGMFLAELIEKYFVSPTLFRVIRLARIGRILRLIKGAKGIRTLLFALMMSLPALFNIGLLLFLVMFIYAIFGMSNFAYVKREVGIDDMFNFETFGNSMICLFQITTSAGWDGLLAPILNSKPPDCDPNKVNPGSSVKGDCGNPSVGIFFFVSYIIISFLVVVNMYIAVILENFSVATEESAEPLSEDDFEMFYEVWEKFDPDATQFMEFEKLSQFAAALEPPLNLPQPNKLQLIAMDLPMVSGDRIHCLDILFAFTKRVLGESGEMDALRIQMEERFMASNPSKVSYQPITTTLKRKQEEVSAVIIQRAYRRHLLKRTVKQASFTYNKNKLKGGANLLVKEDMLIDRINENSITEKTDLTMSTAACPPSYDRVTKPIVEKHEQEGKDEKAKGK</sequence>
<name>SCN1A_MOUSE</name>
<protein>
    <recommendedName>
        <fullName>Sodium channel protein type 1 subunit alpha</fullName>
    </recommendedName>
    <alternativeName>
        <fullName>Sodium channel protein brain I subunit alpha</fullName>
    </alternativeName>
    <alternativeName>
        <fullName>Sodium channel protein type I subunit alpha</fullName>
    </alternativeName>
    <alternativeName>
        <fullName>Voltage-gated sodium channel subunit alpha Nav1.1</fullName>
    </alternativeName>
</protein>
<feature type="chain" id="PRO_0000437536" description="Sodium channel protein type 1 subunit alpha">
    <location>
        <begin position="1"/>
        <end position="2009"/>
    </location>
</feature>
<feature type="topological domain" description="Cytoplasmic" evidence="14">
    <location>
        <begin position="1"/>
        <end position="128"/>
    </location>
</feature>
<feature type="transmembrane region" description="Helical; Name=S1 of repeat I" evidence="3">
    <location>
        <begin position="129"/>
        <end position="146"/>
    </location>
</feature>
<feature type="topological domain" description="Extracellular" evidence="14">
    <location>
        <begin position="147"/>
        <end position="152"/>
    </location>
</feature>
<feature type="transmembrane region" description="Helical; Name=S2 of repeat I" evidence="3">
    <location>
        <begin position="153"/>
        <end position="177"/>
    </location>
</feature>
<feature type="topological domain" description="Cytoplasmic" evidence="14">
    <location>
        <begin position="178"/>
        <end position="188"/>
    </location>
</feature>
<feature type="transmembrane region" description="Helical; Name=S3 of repeat I" evidence="3">
    <location>
        <begin position="189"/>
        <end position="205"/>
    </location>
</feature>
<feature type="topological domain" description="Extracellular" evidence="14">
    <location>
        <begin position="206"/>
        <end position="213"/>
    </location>
</feature>
<feature type="transmembrane region" description="Helical; Name=S4 of repeat I" evidence="3">
    <location>
        <begin position="214"/>
        <end position="235"/>
    </location>
</feature>
<feature type="topological domain" description="Cytoplasmic" evidence="14">
    <location>
        <begin position="236"/>
        <end position="245"/>
    </location>
</feature>
<feature type="transmembrane region" description="Helical; Name=S5 of repeat I" evidence="3">
    <location>
        <begin position="246"/>
        <end position="269"/>
    </location>
</feature>
<feature type="topological domain" description="Extracellular" evidence="14">
    <location>
        <begin position="270"/>
        <end position="369"/>
    </location>
</feature>
<feature type="intramembrane region" description="Pore-forming" evidence="3">
    <location>
        <begin position="370"/>
        <end position="384"/>
    </location>
</feature>
<feature type="topological domain" description="Extracellular" evidence="14">
    <location>
        <begin position="385"/>
        <end position="397"/>
    </location>
</feature>
<feature type="transmembrane region" description="Helical; Name=S6 of repeat I" evidence="3">
    <location>
        <begin position="398"/>
        <end position="423"/>
    </location>
</feature>
<feature type="topological domain" description="Cytoplasmic" evidence="14">
    <location>
        <begin position="424"/>
        <end position="768"/>
    </location>
</feature>
<feature type="transmembrane region" description="Helical; Name=S1 of repeat II" evidence="3">
    <location>
        <begin position="769"/>
        <end position="787"/>
    </location>
</feature>
<feature type="topological domain" description="Extracellular" evidence="14">
    <location>
        <begin position="788"/>
        <end position="797"/>
    </location>
</feature>
<feature type="transmembrane region" description="Helical; Name=S2 of repeat II" evidence="3">
    <location>
        <begin position="798"/>
        <end position="820"/>
    </location>
</feature>
<feature type="topological domain" description="Cytoplasmic" evidence="14">
    <location>
        <begin position="821"/>
        <end position="830"/>
    </location>
</feature>
<feature type="transmembrane region" description="Helical; Name=S3 of repeat II" evidence="3">
    <location>
        <begin position="831"/>
        <end position="849"/>
    </location>
</feature>
<feature type="topological domain" description="Extracellular" evidence="14">
    <location>
        <begin position="850"/>
        <end position="854"/>
    </location>
</feature>
<feature type="transmembrane region" description="Helical; Name=S4 of repeat II" evidence="3">
    <location>
        <begin position="855"/>
        <end position="874"/>
    </location>
</feature>
<feature type="topological domain" description="Cytoplasmic" evidence="14">
    <location>
        <begin position="875"/>
        <end position="891"/>
    </location>
</feature>
<feature type="transmembrane region" description="Helical; Name=S5 of repeat II" evidence="3">
    <location>
        <begin position="892"/>
        <end position="912"/>
    </location>
</feature>
<feature type="topological domain" description="Extracellular" evidence="14">
    <location>
        <begin position="913"/>
        <end position="938"/>
    </location>
</feature>
<feature type="intramembrane region" description="Pore-forming" evidence="3">
    <location>
        <begin position="939"/>
        <end position="952"/>
    </location>
</feature>
<feature type="topological domain" description="Extracellular" evidence="14">
    <location>
        <begin position="953"/>
        <end position="965"/>
    </location>
</feature>
<feature type="transmembrane region" description="Helical; Name=S6 of repeat II" evidence="3">
    <location>
        <begin position="966"/>
        <end position="992"/>
    </location>
</feature>
<feature type="topological domain" description="Cytoplasmic" evidence="14">
    <location>
        <begin position="993"/>
        <end position="1218"/>
    </location>
</feature>
<feature type="transmembrane region" description="Helical; Name=S1 of repeat III" evidence="3">
    <location>
        <begin position="1219"/>
        <end position="1237"/>
    </location>
</feature>
<feature type="topological domain" description="Extracellular" evidence="14">
    <location>
        <begin position="1238"/>
        <end position="1250"/>
    </location>
</feature>
<feature type="transmembrane region" description="Helical; Name=S2 of repeat III" evidence="3">
    <location>
        <begin position="1251"/>
        <end position="1276"/>
    </location>
</feature>
<feature type="topological domain" description="Cytoplasmic" evidence="14">
    <location>
        <begin position="1277"/>
        <end position="1278"/>
    </location>
</feature>
<feature type="transmembrane region" description="Helical; Name=S3 of repeat III" evidence="3">
    <location>
        <begin position="1279"/>
        <end position="1304"/>
    </location>
</feature>
<feature type="topological domain" description="Extracellular" evidence="14">
    <location>
        <begin position="1305"/>
        <end position="1313"/>
    </location>
</feature>
<feature type="transmembrane region" description="Helical; Name=S4 of repeat III" evidence="3">
    <location>
        <begin position="1314"/>
        <end position="1332"/>
    </location>
</feature>
<feature type="topological domain" description="Cytoplasmic" evidence="14">
    <location>
        <begin position="1333"/>
        <end position="1345"/>
    </location>
</feature>
<feature type="transmembrane region" description="Helical; Name=S5 of repeat III" evidence="3">
    <location>
        <begin position="1346"/>
        <end position="1369"/>
    </location>
</feature>
<feature type="topological domain" description="Extracellular" evidence="14">
    <location>
        <begin position="1370"/>
        <end position="1415"/>
    </location>
</feature>
<feature type="intramembrane region" description="Pore-forming" evidence="3">
    <location>
        <begin position="1416"/>
        <end position="1433"/>
    </location>
</feature>
<feature type="topological domain" description="Extracellular" evidence="14">
    <location>
        <begin position="1434"/>
        <end position="1457"/>
    </location>
</feature>
<feature type="transmembrane region" description="Helical; Name=S6 of repeat III" evidence="3">
    <location>
        <begin position="1458"/>
        <end position="1483"/>
    </location>
</feature>
<feature type="topological domain" description="Cytoplasmic" evidence="14">
    <location>
        <begin position="1484"/>
        <end position="1541"/>
    </location>
</feature>
<feature type="transmembrane region" description="Helical; Name=S1 of repeat IV" evidence="3">
    <location>
        <begin position="1542"/>
        <end position="1560"/>
    </location>
</feature>
<feature type="topological domain" description="Extracellular" evidence="14">
    <location>
        <begin position="1561"/>
        <end position="1571"/>
    </location>
</feature>
<feature type="transmembrane region" description="Helical; Name=S2 of repeat IV" evidence="3">
    <location>
        <begin position="1572"/>
        <end position="1593"/>
    </location>
</feature>
<feature type="topological domain" description="Cytoplasmic" evidence="14">
    <location>
        <begin position="1594"/>
        <end position="1601"/>
    </location>
</feature>
<feature type="transmembrane region" description="Helical; Name=S3 of repeat IV" evidence="3">
    <location>
        <begin position="1602"/>
        <end position="1623"/>
    </location>
</feature>
<feature type="topological domain" description="Extracellular" evidence="14">
    <location>
        <begin position="1624"/>
        <end position="1636"/>
    </location>
</feature>
<feature type="transmembrane region" description="Helical; Name=S4 of repeat IV" evidence="3">
    <location>
        <begin position="1637"/>
        <end position="1655"/>
    </location>
</feature>
<feature type="topological domain" description="Cytoplasmic" evidence="14">
    <location>
        <begin position="1656"/>
        <end position="1665"/>
    </location>
</feature>
<feature type="transmembrane region" description="Helical; Name=S5 of repeat IV" evidence="3">
    <location>
        <begin position="1666"/>
        <end position="1688"/>
    </location>
</feature>
<feature type="topological domain" description="Extracellular" evidence="14">
    <location>
        <begin position="1689"/>
        <end position="1711"/>
    </location>
</feature>
<feature type="intramembrane region" description="Pore-forming" evidence="3">
    <location>
        <begin position="1712"/>
        <end position="1726"/>
    </location>
</feature>
<feature type="topological domain" description="Extracellular" evidence="14">
    <location>
        <begin position="1727"/>
        <end position="1759"/>
    </location>
</feature>
<feature type="transmembrane region" description="Helical; Name=S6 of repeat IV" evidence="3">
    <location>
        <begin position="1760"/>
        <end position="1788"/>
    </location>
</feature>
<feature type="topological domain" description="Cytoplasmic" evidence="14">
    <location>
        <begin position="1789"/>
        <end position="2009"/>
    </location>
</feature>
<feature type="repeat" description="I" evidence="1">
    <location>
        <begin position="110"/>
        <end position="454"/>
    </location>
</feature>
<feature type="repeat" description="II" evidence="1">
    <location>
        <begin position="750"/>
        <end position="1022"/>
    </location>
</feature>
<feature type="repeat" description="III" evidence="1">
    <location>
        <begin position="1200"/>
        <end position="1514"/>
    </location>
</feature>
<feature type="repeat" description="IV" evidence="1">
    <location>
        <begin position="1523"/>
        <end position="1821"/>
    </location>
</feature>
<feature type="domain" description="IQ" evidence="5">
    <location>
        <begin position="1915"/>
        <end position="1944"/>
    </location>
</feature>
<feature type="region of interest" description="Disordered" evidence="6">
    <location>
        <begin position="28"/>
        <end position="60"/>
    </location>
</feature>
<feature type="region of interest" description="Disordered" evidence="6">
    <location>
        <begin position="455"/>
        <end position="528"/>
    </location>
</feature>
<feature type="region of interest" description="Disordered" evidence="6">
    <location>
        <begin position="584"/>
        <end position="627"/>
    </location>
</feature>
<feature type="region of interest" description="Disordered" evidence="6">
    <location>
        <begin position="1129"/>
        <end position="1163"/>
    </location>
</feature>
<feature type="region of interest" description="S1-S2 loop of repeat IV" evidence="13">
    <location>
        <begin position="1561"/>
        <end position="1571"/>
    </location>
</feature>
<feature type="region of interest" description="S3b-S4 loop of repeat IV" evidence="13">
    <location>
        <begin position="1619"/>
        <end position="1636"/>
    </location>
</feature>
<feature type="region of interest" description="Disordered" evidence="6">
    <location>
        <begin position="1984"/>
        <end position="2009"/>
    </location>
</feature>
<feature type="compositionally biased region" description="Basic and acidic residues" evidence="6">
    <location>
        <begin position="28"/>
        <end position="48"/>
    </location>
</feature>
<feature type="compositionally biased region" description="Low complexity" evidence="6">
    <location>
        <begin position="456"/>
        <end position="466"/>
    </location>
</feature>
<feature type="compositionally biased region" description="Low complexity" evidence="6">
    <location>
        <begin position="479"/>
        <end position="492"/>
    </location>
</feature>
<feature type="compositionally biased region" description="Basic residues" evidence="6">
    <location>
        <begin position="495"/>
        <end position="506"/>
    </location>
</feature>
<feature type="compositionally biased region" description="Basic and acidic residues" evidence="6">
    <location>
        <begin position="507"/>
        <end position="528"/>
    </location>
</feature>
<feature type="compositionally biased region" description="Basic and acidic residues" evidence="6">
    <location>
        <begin position="593"/>
        <end position="607"/>
    </location>
</feature>
<feature type="compositionally biased region" description="Basic and acidic residues" evidence="6">
    <location>
        <begin position="1988"/>
        <end position="2009"/>
    </location>
</feature>
<feature type="modified residue" description="Phosphoserine" evidence="1">
    <location>
        <position position="470"/>
    </location>
</feature>
<feature type="modified residue" description="Phosphoserine" evidence="1">
    <location>
        <position position="523"/>
    </location>
</feature>
<feature type="modified residue" description="Phosphoserine" evidence="1">
    <location>
        <position position="525"/>
    </location>
</feature>
<feature type="modified residue" description="Phosphoserine" evidence="1">
    <location>
        <position position="550"/>
    </location>
</feature>
<feature type="modified residue" description="Phosphoserine" evidence="16">
    <location>
        <position position="551"/>
    </location>
</feature>
<feature type="modified residue" description="Phosphoserine" evidence="1">
    <location>
        <position position="607"/>
    </location>
</feature>
<feature type="modified residue" description="Phosphoserine" evidence="1">
    <location>
        <position position="730"/>
    </location>
</feature>
<feature type="modified residue" description="Phosphoserine; by PKC" evidence="2">
    <location>
        <position position="1516"/>
    </location>
</feature>
<feature type="glycosylation site" description="N-linked (GlcNAc...) asparagine" evidence="4">
    <location>
        <position position="295"/>
    </location>
</feature>
<feature type="glycosylation site" description="N-linked (GlcNAc...) asparagine" evidence="4">
    <location>
        <position position="301"/>
    </location>
</feature>
<feature type="glycosylation site" description="N-linked (GlcNAc...) asparagine" evidence="4">
    <location>
        <position position="306"/>
    </location>
</feature>
<feature type="glycosylation site" description="N-linked (GlcNAc...) asparagine" evidence="4">
    <location>
        <position position="338"/>
    </location>
</feature>
<feature type="disulfide bond" evidence="3">
    <location>
        <begin position="277"/>
        <end position="345"/>
    </location>
</feature>
<feature type="disulfide bond" evidence="3">
    <location>
        <begin position="336"/>
        <end position="351"/>
    </location>
</feature>
<feature type="disulfide bond" description="Interchain; with SCN2B or SCN4B" evidence="3">
    <location>
        <position position="919"/>
    </location>
</feature>
<feature type="disulfide bond" description="Interchain; with the conotoxin GVIIJ (when the channel is not linked to SCN2B or SCN4B; the bond to SCN2B or SCN4B protects the channel from the inhibition by toxin)" evidence="2">
    <location>
        <position position="919"/>
    </location>
</feature>
<feature type="disulfide bond" evidence="3">
    <location>
        <begin position="921"/>
        <end position="927"/>
    </location>
</feature>
<feature type="disulfide bond" evidence="3">
    <location>
        <begin position="959"/>
        <end position="968"/>
    </location>
</feature>
<feature type="disulfide bond" evidence="3">
    <location>
        <begin position="1376"/>
        <end position="1396"/>
    </location>
</feature>
<feature type="disulfide bond" evidence="3">
    <location>
        <begin position="1741"/>
        <end position="1756"/>
    </location>
</feature>
<feature type="splice variant" id="VSP_058552" description="In isoform 3.">
    <location>
        <begin position="654"/>
        <end position="681"/>
    </location>
</feature>
<feature type="splice variant" id="VSP_058553" description="In isoform 2.">
    <location>
        <begin position="671"/>
        <end position="681"/>
    </location>
</feature>
<feature type="mutagenesis site" description="Homozygous mice display spontaneous generalized seizures and premature death between P16 and P26. Heterozygous mice show infrequent spontaneous seizures, increased susceptibility to chemically and hyperthermia-induced generalized seizures and sleep abnormalities. Heterozygous mice also show deficits in social behavior, spatial memory, cued fear conditioning, pre-pulse inhibition and risk assessment." evidence="9 12">
    <original>R</original>
    <variation>H</variation>
    <location>
        <position position="1648"/>
    </location>
</feature>
<gene>
    <name evidence="15" type="primary">Scn1a</name>
</gene>
<comment type="function">
    <text evidence="7 8 11 13">Pore-forming subunit of Nav1.1, a voltage-gated sodium (Nav) channel that directly mediates the depolarizing phase of action potentials in excitable membranes. Navs, also called VGSCs (voltage-gated sodium channels) or VDSCs (voltage-dependent sodium channels), operate by switching between closed and open conformations depending on the voltage difference across the membrane. In the open conformation they allow Na(+) ions to selectively pass through the pore, along their electrochemical gradient. The influx of Na(+) ions provokes membrane depolarization, initiating the propagation of electrical signals throughout cells and tissues (PubMed:16921370, PubMed:17928448, PubMed:27281198). By regulating the excitability of neurons, ensures that they respond appropriately to synaptic inputs, maintaining the balance between excitation and inhibition in brain neural circuits (PubMed:16921370, PubMed:22914087). Nav1.1 plays a role in controlling the excitability and action potential propagation from somatosensory neurons, thereby contributing to the sensory perception of mechanically-induced pain (PubMed:27281198).</text>
</comment>
<comment type="catalytic activity">
    <reaction evidence="13">
        <text>Na(+)(in) = Na(+)(out)</text>
        <dbReference type="Rhea" id="RHEA:34963"/>
        <dbReference type="ChEBI" id="CHEBI:29101"/>
    </reaction>
</comment>
<comment type="activity regulation">
    <text evidence="7 13">Activated by the spider toxins Hm1a and Hm1b (H.maculata, AC P60992 and AC P0DOC5) eliciting acute pain and mechanical allodynia.</text>
</comment>
<comment type="subunit">
    <text evidence="3">The Nav1.1 voltage-gated sodium channel consists of an ion-conducting alpha subunit SCN1A which is functional on its own regulated by one or more beta-1 (SCN1B), beta-2 (SCN2B), beta-3 (SCN3B) and beta-4 (SCN4B) subunits. SCN1B and SCN3B are non-covalently associated with SCN1A. SCN2B and SCN4B are disulfide-linked to SCN1A. SCN1B regulates both the expression at the plasma membrane and the voltage dependence of Nav1.1 inactivation. SCN3B and SCN4B reduce Nav1.1 conductance. Probably interacts with TMEM233; modulates the gating properties of NaV1.1. Interacts with FGF13; regulates the steady-state inactivation of Nav.1.1.</text>
</comment>
<comment type="subcellular location">
    <subcellularLocation>
        <location evidence="13">Cell membrane</location>
        <topology evidence="3">Multi-pass membrane protein</topology>
    </subcellularLocation>
</comment>
<comment type="alternative products">
    <event type="alternative splicing"/>
    <isoform>
        <id>A2APX8-1</id>
        <name>1</name>
        <sequence type="displayed"/>
    </isoform>
    <isoform>
        <id>A2APX8-2</id>
        <name>2</name>
        <sequence type="described" ref="VSP_058553"/>
    </isoform>
    <isoform>
        <id>A2APX8-3</id>
        <name>3</name>
        <sequence type="described" ref="VSP_058552"/>
    </isoform>
</comment>
<comment type="tissue specificity">
    <text evidence="8 13">Present in cerebellar Purkinje neurons (at protein level) (PubMed:17928448). Expressed by myelinated, non-C-fiber neurons in sensory ganglia (PubMed:27281198).</text>
</comment>
<comment type="domain">
    <text evidence="13">The S3b-S4 and S1-S2 loops of repeat IV are targeted by H.maculata toxins Hm1a and Hm1b, leading to inhibit fast inactivation of Nav1.1/SCN1A. Selectivity for H.maculata toxins Hm1a and Hm1b depends on S1-S2 loops of repeat IV (PubMed:27281198).</text>
</comment>
<comment type="domain">
    <text evidence="14">The sequence contains 4 internal repeats, each with 5 hydrophobic segments (S1, S2, S3, S5, S6) and one positively charged segment (S4). Segments S4 are probably the voltage-sensors and are characterized by a series of positively charged amino acids at every third position.</text>
</comment>
<comment type="PTM">
    <text evidence="2">Phosphorylation at Ser-1516 by PKC in a highly conserved cytoplasmic loop slows inactivation of the sodium channel and reduces peak sodium currents.</text>
</comment>
<comment type="disruption phenotype">
    <text evidence="7 10 11">Homozygous mice display severe seizures and premature death on postnatal day 15 (PubMed:16921370). Mice show severe motor deficits, including irregularity of stride length during locomotion, impaired motor reflexes in grasping and mild tremor in limbs when immobile, consistent with cerebellar dysfunction (PubMed:16921370). Heterozygous mice exhibit autistic-like behavior, characterized by hyperactivity, stereotyped behaviors, social interaction deficits and impaired context-dependent spatial memory (PubMed:22914087). Defects are caused by caused by impaired GABAergic neurotransmission (PubMed:22914087). Conditional knockout in forebrain GABAergic neurons leads to premature death caused by generalized tonic-clonic seizures in heterozygous mice (PubMed:22908258).</text>
</comment>
<comment type="similarity">
    <text evidence="14">Belongs to the sodium channel (TC 1.A.1.10) family. Nav1.1/SCN1A subfamily.</text>
</comment>
<dbReference type="EMBL" id="AL844526">
    <property type="status" value="NOT_ANNOTATED_CDS"/>
    <property type="molecule type" value="Genomic_DNA"/>
</dbReference>
<dbReference type="EMBL" id="AL928726">
    <property type="status" value="NOT_ANNOTATED_CDS"/>
    <property type="molecule type" value="Genomic_DNA"/>
</dbReference>
<dbReference type="EMBL" id="AJ810515">
    <property type="protein sequence ID" value="CAH17959.1"/>
    <property type="molecule type" value="mRNA"/>
</dbReference>
<dbReference type="CCDS" id="CCDS38131.1">
    <molecule id="A2APX8-2"/>
</dbReference>
<dbReference type="CCDS" id="CCDS84530.1">
    <molecule id="A2APX8-1"/>
</dbReference>
<dbReference type="RefSeq" id="NP_001300926.1">
    <molecule id="A2APX8-1"/>
    <property type="nucleotide sequence ID" value="NM_001313997.1"/>
</dbReference>
<dbReference type="RefSeq" id="NP_061203.2">
    <molecule id="A2APX8-2"/>
    <property type="nucleotide sequence ID" value="NM_018733.2"/>
</dbReference>
<dbReference type="RefSeq" id="XP_006499090.1">
    <molecule id="A2APX8-1"/>
    <property type="nucleotide sequence ID" value="XM_006499027.4"/>
</dbReference>
<dbReference type="RefSeq" id="XP_006499091.1">
    <molecule id="A2APX8-2"/>
    <property type="nucleotide sequence ID" value="XM_006499028.4"/>
</dbReference>
<dbReference type="SMR" id="A2APX8"/>
<dbReference type="FunCoup" id="A2APX8">
    <property type="interactions" value="635"/>
</dbReference>
<dbReference type="STRING" id="10090.ENSMUSP00000107985"/>
<dbReference type="BindingDB" id="A2APX8"/>
<dbReference type="ChEMBL" id="CHEMBL4523103"/>
<dbReference type="DrugCentral" id="A2APX8"/>
<dbReference type="GlyConnect" id="2718">
    <property type="glycosylation" value="1 N-Linked glycan (1 site)"/>
</dbReference>
<dbReference type="GlyCosmos" id="A2APX8">
    <property type="glycosylation" value="5 sites, 1 glycan"/>
</dbReference>
<dbReference type="GlyGen" id="A2APX8">
    <property type="glycosylation" value="11 sites, 6 N-linked glycans (6 sites), 1 O-linked glycan (1 site)"/>
</dbReference>
<dbReference type="iPTMnet" id="A2APX8"/>
<dbReference type="PhosphoSitePlus" id="A2APX8"/>
<dbReference type="SwissPalm" id="A2APX8"/>
<dbReference type="PaxDb" id="10090-ENSMUSP00000076697"/>
<dbReference type="ProteomicsDB" id="256931">
    <molecule id="A2APX8-1"/>
</dbReference>
<dbReference type="ProteomicsDB" id="256932">
    <molecule id="A2APX8-2"/>
</dbReference>
<dbReference type="ProteomicsDB" id="256933">
    <molecule id="A2APX8-3"/>
</dbReference>
<dbReference type="ABCD" id="A2APX8">
    <property type="antibodies" value="3 sequenced antibodies"/>
</dbReference>
<dbReference type="Antibodypedia" id="47608">
    <property type="antibodies" value="222 antibodies from 32 providers"/>
</dbReference>
<dbReference type="DNASU" id="20265"/>
<dbReference type="Ensembl" id="ENSMUST00000077489.12">
    <molecule id="A2APX8-2"/>
    <property type="protein sequence ID" value="ENSMUSP00000076697.6"/>
    <property type="gene ID" value="ENSMUSG00000064329.15"/>
</dbReference>
<dbReference type="Ensembl" id="ENSMUST00000094951.10">
    <molecule id="A2APX8-3"/>
    <property type="protein sequence ID" value="ENSMUSP00000092558.4"/>
    <property type="gene ID" value="ENSMUSG00000064329.15"/>
</dbReference>
<dbReference type="Ensembl" id="ENSMUST00000112366.8">
    <molecule id="A2APX8-1"/>
    <property type="protein sequence ID" value="ENSMUSP00000107985.2"/>
    <property type="gene ID" value="ENSMUSG00000064329.15"/>
</dbReference>
<dbReference type="Ensembl" id="ENSMUST00000138910.4">
    <molecule id="A2APX8-2"/>
    <property type="protein sequence ID" value="ENSMUSP00000116881.4"/>
    <property type="gene ID" value="ENSMUSG00000064329.15"/>
</dbReference>
<dbReference type="GeneID" id="20265"/>
<dbReference type="KEGG" id="mmu:20265"/>
<dbReference type="UCSC" id="uc033hnf.1">
    <property type="organism name" value="mouse"/>
</dbReference>
<dbReference type="AGR" id="MGI:98246"/>
<dbReference type="CTD" id="6323"/>
<dbReference type="MGI" id="MGI:98246">
    <property type="gene designation" value="Scn1a"/>
</dbReference>
<dbReference type="VEuPathDB" id="HostDB:ENSMUSG00000064329"/>
<dbReference type="eggNOG" id="KOG2301">
    <property type="taxonomic scope" value="Eukaryota"/>
</dbReference>
<dbReference type="GeneTree" id="ENSGT00940000154224"/>
<dbReference type="InParanoid" id="A2APX8"/>
<dbReference type="OMA" id="KTELTMS"/>
<dbReference type="OrthoDB" id="2984333at2759"/>
<dbReference type="PhylomeDB" id="A2APX8"/>
<dbReference type="TreeFam" id="TF323985"/>
<dbReference type="BioGRID-ORCS" id="20265">
    <property type="hits" value="2 hits in 76 CRISPR screens"/>
</dbReference>
<dbReference type="ChiTaRS" id="Scn1a">
    <property type="organism name" value="mouse"/>
</dbReference>
<dbReference type="PRO" id="PR:A2APX8"/>
<dbReference type="Proteomes" id="UP000000589">
    <property type="component" value="Chromosome 2"/>
</dbReference>
<dbReference type="RNAct" id="A2APX8">
    <property type="molecule type" value="protein"/>
</dbReference>
<dbReference type="Bgee" id="ENSMUSG00000064329">
    <property type="expression patterns" value="Expressed in facial nucleus and 116 other cell types or tissues"/>
</dbReference>
<dbReference type="ExpressionAtlas" id="A2APX8">
    <property type="expression patterns" value="baseline and differential"/>
</dbReference>
<dbReference type="GO" id="GO:0030424">
    <property type="term" value="C:axon"/>
    <property type="evidence" value="ECO:0000314"/>
    <property type="project" value="MGI"/>
</dbReference>
<dbReference type="GO" id="GO:0043194">
    <property type="term" value="C:axon initial segment"/>
    <property type="evidence" value="ECO:0000314"/>
    <property type="project" value="MGI"/>
</dbReference>
<dbReference type="GO" id="GO:0014704">
    <property type="term" value="C:intercalated disc"/>
    <property type="evidence" value="ECO:0000314"/>
    <property type="project" value="MGI"/>
</dbReference>
<dbReference type="GO" id="GO:0016020">
    <property type="term" value="C:membrane"/>
    <property type="evidence" value="ECO:0000314"/>
    <property type="project" value="MGI"/>
</dbReference>
<dbReference type="GO" id="GO:0043025">
    <property type="term" value="C:neuronal cell body"/>
    <property type="evidence" value="ECO:0000314"/>
    <property type="project" value="MGI"/>
</dbReference>
<dbReference type="GO" id="GO:0033268">
    <property type="term" value="C:node of Ranvier"/>
    <property type="evidence" value="ECO:0000314"/>
    <property type="project" value="MGI"/>
</dbReference>
<dbReference type="GO" id="GO:0016604">
    <property type="term" value="C:nuclear body"/>
    <property type="evidence" value="ECO:0007669"/>
    <property type="project" value="Ensembl"/>
</dbReference>
<dbReference type="GO" id="GO:0034706">
    <property type="term" value="C:sodium channel complex"/>
    <property type="evidence" value="ECO:0000353"/>
    <property type="project" value="MGI"/>
</dbReference>
<dbReference type="GO" id="GO:0030315">
    <property type="term" value="C:T-tubule"/>
    <property type="evidence" value="ECO:0000314"/>
    <property type="project" value="MGI"/>
</dbReference>
<dbReference type="GO" id="GO:0001518">
    <property type="term" value="C:voltage-gated sodium channel complex"/>
    <property type="evidence" value="ECO:0007669"/>
    <property type="project" value="InterPro"/>
</dbReference>
<dbReference type="GO" id="GO:0030018">
    <property type="term" value="C:Z disc"/>
    <property type="evidence" value="ECO:0000314"/>
    <property type="project" value="BHF-UCL"/>
</dbReference>
<dbReference type="GO" id="GO:0099508">
    <property type="term" value="F:voltage-gated monoatomic ion channel activity involved in regulation of presynaptic membrane potential"/>
    <property type="evidence" value="ECO:0007669"/>
    <property type="project" value="Ensembl"/>
</dbReference>
<dbReference type="GO" id="GO:0005248">
    <property type="term" value="F:voltage-gated sodium channel activity"/>
    <property type="evidence" value="ECO:0000314"/>
    <property type="project" value="UniProtKB"/>
</dbReference>
<dbReference type="GO" id="GO:0007628">
    <property type="term" value="P:adult walking behavior"/>
    <property type="evidence" value="ECO:0000315"/>
    <property type="project" value="MGI"/>
</dbReference>
<dbReference type="GO" id="GO:0086002">
    <property type="term" value="P:cardiac muscle cell action potential involved in contraction"/>
    <property type="evidence" value="ECO:0007669"/>
    <property type="project" value="Ensembl"/>
</dbReference>
<dbReference type="GO" id="GO:0050966">
    <property type="term" value="P:detection of mechanical stimulus involved in sensory perception of pain"/>
    <property type="evidence" value="ECO:0000314"/>
    <property type="project" value="UniProtKB"/>
</dbReference>
<dbReference type="GO" id="GO:0008340">
    <property type="term" value="P:determination of adult lifespan"/>
    <property type="evidence" value="ECO:0000315"/>
    <property type="project" value="MGI"/>
</dbReference>
<dbReference type="GO" id="GO:0051649">
    <property type="term" value="P:establishment of localization in cell"/>
    <property type="evidence" value="ECO:0000315"/>
    <property type="project" value="MGI"/>
</dbReference>
<dbReference type="GO" id="GO:0086010">
    <property type="term" value="P:membrane depolarization during action potential"/>
    <property type="evidence" value="ECO:0000314"/>
    <property type="project" value="UniProtKB"/>
</dbReference>
<dbReference type="GO" id="GO:0021675">
    <property type="term" value="P:nerve development"/>
    <property type="evidence" value="ECO:0000315"/>
    <property type="project" value="MGI"/>
</dbReference>
<dbReference type="GO" id="GO:0050884">
    <property type="term" value="P:neuromuscular process controlling posture"/>
    <property type="evidence" value="ECO:0000315"/>
    <property type="project" value="MGI"/>
</dbReference>
<dbReference type="GO" id="GO:0019228">
    <property type="term" value="P:neuronal action potential"/>
    <property type="evidence" value="ECO:0000315"/>
    <property type="project" value="MGI"/>
</dbReference>
<dbReference type="GO" id="GO:0019227">
    <property type="term" value="P:neuronal action potential propagation"/>
    <property type="evidence" value="ECO:0000315"/>
    <property type="project" value="MGI"/>
</dbReference>
<dbReference type="GO" id="GO:0042391">
    <property type="term" value="P:regulation of membrane potential"/>
    <property type="evidence" value="ECO:0000315"/>
    <property type="project" value="MGI"/>
</dbReference>
<dbReference type="GO" id="GO:0006814">
    <property type="term" value="P:sodium ion transport"/>
    <property type="evidence" value="ECO:0000315"/>
    <property type="project" value="MGI"/>
</dbReference>
<dbReference type="CDD" id="cd13433">
    <property type="entry name" value="Na_channel_gate"/>
    <property type="match status" value="1"/>
</dbReference>
<dbReference type="FunFam" id="1.10.238.10:FF:000002">
    <property type="entry name" value="Sodium channel protein"/>
    <property type="match status" value="1"/>
</dbReference>
<dbReference type="FunFam" id="1.10.287.70:FF:000001">
    <property type="entry name" value="Sodium channel protein"/>
    <property type="match status" value="1"/>
</dbReference>
<dbReference type="FunFam" id="1.10.287.70:FF:000006">
    <property type="entry name" value="Sodium channel protein"/>
    <property type="match status" value="1"/>
</dbReference>
<dbReference type="FunFam" id="1.20.120.350:FF:000002">
    <property type="entry name" value="Sodium channel protein"/>
    <property type="match status" value="1"/>
</dbReference>
<dbReference type="FunFam" id="1.20.120.350:FF:000004">
    <property type="entry name" value="Sodium channel protein"/>
    <property type="match status" value="1"/>
</dbReference>
<dbReference type="FunFam" id="1.20.120.350:FF:000005">
    <property type="entry name" value="Sodium channel protein"/>
    <property type="match status" value="1"/>
</dbReference>
<dbReference type="FunFam" id="1.20.5.1190:FF:000001">
    <property type="entry name" value="Sodium channel protein"/>
    <property type="match status" value="1"/>
</dbReference>
<dbReference type="FunFam" id="1.20.120.350:FF:000003">
    <property type="entry name" value="Voltage-dependent sodium channel"/>
    <property type="match status" value="1"/>
</dbReference>
<dbReference type="Gene3D" id="1.10.287.70">
    <property type="match status" value="4"/>
</dbReference>
<dbReference type="Gene3D" id="1.10.238.10">
    <property type="entry name" value="EF-hand"/>
    <property type="match status" value="1"/>
</dbReference>
<dbReference type="Gene3D" id="1.20.5.1190">
    <property type="entry name" value="iswi atpase"/>
    <property type="match status" value="1"/>
</dbReference>
<dbReference type="Gene3D" id="1.20.120.350">
    <property type="entry name" value="Voltage-gated potassium channels. Chain C"/>
    <property type="match status" value="4"/>
</dbReference>
<dbReference type="InterPro" id="IPR005821">
    <property type="entry name" value="Ion_trans_dom"/>
</dbReference>
<dbReference type="InterPro" id="IPR008051">
    <property type="entry name" value="Na_channel_a1su"/>
</dbReference>
<dbReference type="InterPro" id="IPR001696">
    <property type="entry name" value="Na_channel_asu"/>
</dbReference>
<dbReference type="InterPro" id="IPR044564">
    <property type="entry name" value="Na_chnl_inactivation_gate"/>
</dbReference>
<dbReference type="InterPro" id="IPR010526">
    <property type="entry name" value="Na_trans_assoc_dom"/>
</dbReference>
<dbReference type="InterPro" id="IPR024583">
    <property type="entry name" value="Na_trans_cytopl"/>
</dbReference>
<dbReference type="InterPro" id="IPR043203">
    <property type="entry name" value="VGCC_Ca_Na"/>
</dbReference>
<dbReference type="InterPro" id="IPR027359">
    <property type="entry name" value="Volt_channel_dom_sf"/>
</dbReference>
<dbReference type="PANTHER" id="PTHR10037:SF280">
    <property type="entry name" value="SODIUM CHANNEL PROTEIN TYPE 1 SUBUNIT ALPHA"/>
    <property type="match status" value="1"/>
</dbReference>
<dbReference type="PANTHER" id="PTHR10037">
    <property type="entry name" value="VOLTAGE-GATED CATION CHANNEL CALCIUM AND SODIUM"/>
    <property type="match status" value="1"/>
</dbReference>
<dbReference type="Pfam" id="PF00520">
    <property type="entry name" value="Ion_trans"/>
    <property type="match status" value="4"/>
</dbReference>
<dbReference type="Pfam" id="PF24609">
    <property type="entry name" value="IQ_SCN5A_C"/>
    <property type="match status" value="1"/>
</dbReference>
<dbReference type="Pfam" id="PF06512">
    <property type="entry name" value="Na_trans_assoc"/>
    <property type="match status" value="1"/>
</dbReference>
<dbReference type="Pfam" id="PF11933">
    <property type="entry name" value="Na_trans_cytopl"/>
    <property type="match status" value="1"/>
</dbReference>
<dbReference type="PRINTS" id="PR00170">
    <property type="entry name" value="NACHANNEL"/>
</dbReference>
<dbReference type="PRINTS" id="PR01664">
    <property type="entry name" value="NACHANNEL1"/>
</dbReference>
<dbReference type="SUPFAM" id="SSF81324">
    <property type="entry name" value="Voltage-gated potassium channels"/>
    <property type="match status" value="4"/>
</dbReference>
<accession>A2APX8</accession>
<accession>A2APX6</accession>
<accession>A2APX7</accession>
<accession>Q68V28</accession>
<proteinExistence type="evidence at protein level"/>
<keyword id="KW-0025">Alternative splicing</keyword>
<keyword id="KW-1003">Cell membrane</keyword>
<keyword id="KW-1015">Disulfide bond</keyword>
<keyword id="KW-0325">Glycoprotein</keyword>
<keyword id="KW-0407">Ion channel</keyword>
<keyword id="KW-0406">Ion transport</keyword>
<keyword id="KW-0472">Membrane</keyword>
<keyword id="KW-0597">Phosphoprotein</keyword>
<keyword id="KW-1185">Reference proteome</keyword>
<keyword id="KW-0677">Repeat</keyword>
<keyword id="KW-0915">Sodium</keyword>
<keyword id="KW-0894">Sodium channel</keyword>
<keyword id="KW-0739">Sodium transport</keyword>
<keyword id="KW-0812">Transmembrane</keyword>
<keyword id="KW-1133">Transmembrane helix</keyword>
<keyword id="KW-0813">Transport</keyword>
<keyword id="KW-0851">Voltage-gated channel</keyword>
<organism>
    <name type="scientific">Mus musculus</name>
    <name type="common">Mouse</name>
    <dbReference type="NCBI Taxonomy" id="10090"/>
    <lineage>
        <taxon>Eukaryota</taxon>
        <taxon>Metazoa</taxon>
        <taxon>Chordata</taxon>
        <taxon>Craniata</taxon>
        <taxon>Vertebrata</taxon>
        <taxon>Euteleostomi</taxon>
        <taxon>Mammalia</taxon>
        <taxon>Eutheria</taxon>
        <taxon>Euarchontoglires</taxon>
        <taxon>Glires</taxon>
        <taxon>Rodentia</taxon>
        <taxon>Myomorpha</taxon>
        <taxon>Muroidea</taxon>
        <taxon>Muridae</taxon>
        <taxon>Murinae</taxon>
        <taxon>Mus</taxon>
        <taxon>Mus</taxon>
    </lineage>
</organism>
<reference key="1">
    <citation type="journal article" date="2009" name="PLoS Biol.">
        <title>Lineage-specific biology revealed by a finished genome assembly of the mouse.</title>
        <authorList>
            <person name="Church D.M."/>
            <person name="Goodstadt L."/>
            <person name="Hillier L.W."/>
            <person name="Zody M.C."/>
            <person name="Goldstein S."/>
            <person name="She X."/>
            <person name="Bult C.J."/>
            <person name="Agarwala R."/>
            <person name="Cherry J.L."/>
            <person name="DiCuccio M."/>
            <person name="Hlavina W."/>
            <person name="Kapustin Y."/>
            <person name="Meric P."/>
            <person name="Maglott D."/>
            <person name="Birtle Z."/>
            <person name="Marques A.C."/>
            <person name="Graves T."/>
            <person name="Zhou S."/>
            <person name="Teague B."/>
            <person name="Potamousis K."/>
            <person name="Churas C."/>
            <person name="Place M."/>
            <person name="Herschleb J."/>
            <person name="Runnheim R."/>
            <person name="Forrest D."/>
            <person name="Amos-Landgraf J."/>
            <person name="Schwartz D.C."/>
            <person name="Cheng Z."/>
            <person name="Lindblad-Toh K."/>
            <person name="Eichler E.E."/>
            <person name="Ponting C.P."/>
        </authorList>
    </citation>
    <scope>NUCLEOTIDE SEQUENCE [LARGE SCALE GENOMIC DNA]</scope>
    <source>
        <strain>C57BL/6J</strain>
    </source>
</reference>
<reference key="2">
    <citation type="journal article" date="2005" name="J. Physiol. (Lond.)">
        <title>Expression pattern of neuronal and skeletal muscle voltage-gated Na+ channels in the developing mouse heart.</title>
        <authorList>
            <person name="Haufe V."/>
            <person name="Camacho J.A."/>
            <person name="Dumaine R."/>
            <person name="Guenther B."/>
            <person name="Bollensdorff C."/>
            <person name="von Banchet G.S."/>
            <person name="Benndorf K."/>
            <person name="Zimmer T."/>
        </authorList>
    </citation>
    <scope>NUCLEOTIDE SEQUENCE [MRNA] OF 1489-1708</scope>
    <source>
        <strain>BALB/cJ</strain>
        <tissue>Brain</tissue>
    </source>
</reference>
<reference key="3">
    <citation type="journal article" date="2006" name="Nat. Neurosci.">
        <title>Reduced sodium current in GABAergic interneurons in a mouse model of severe myoclonic epilepsy in infancy.</title>
        <authorList>
            <person name="Yu F.H."/>
            <person name="Mantegazza M."/>
            <person name="Westenbroek R.E."/>
            <person name="Robbins C.A."/>
            <person name="Kalume F."/>
            <person name="Burton K.A."/>
            <person name="Spain W.J."/>
            <person name="McKnight G.S."/>
            <person name="Scheuer T."/>
            <person name="Catterall W.A."/>
        </authorList>
    </citation>
    <scope>FUNCTION</scope>
    <scope>DISRUPTION PHENOTYPE</scope>
</reference>
<reference key="4">
    <citation type="journal article" date="2007" name="J. Neurosci.">
        <title>Reduced sodium current in Purkinje neurons from Nav1.1 mutant mice: implications for ataxia in severe myoclonic epilepsy in infancy.</title>
        <authorList>
            <person name="Kalume F."/>
            <person name="Yu F.H."/>
            <person name="Westenbroek R.E."/>
            <person name="Scheuer T."/>
            <person name="Catterall W.A."/>
        </authorList>
    </citation>
    <scope>FUNCTION</scope>
    <scope>TISSUE SPECIFICITY</scope>
</reference>
<reference key="5">
    <citation type="journal article" date="2010" name="Cell">
        <title>A tissue-specific atlas of mouse protein phosphorylation and expression.</title>
        <authorList>
            <person name="Huttlin E.L."/>
            <person name="Jedrychowski M.P."/>
            <person name="Elias J.E."/>
            <person name="Goswami T."/>
            <person name="Rad R."/>
            <person name="Beausoleil S.A."/>
            <person name="Villen J."/>
            <person name="Haas W."/>
            <person name="Sowa M.E."/>
            <person name="Gygi S.P."/>
        </authorList>
    </citation>
    <scope>PHOSPHORYLATION [LARGE SCALE ANALYSIS] AT SER-551</scope>
    <scope>IDENTIFICATION BY MASS SPECTROMETRY [LARGE SCALE ANALYSIS]</scope>
    <source>
        <tissue>Brain</tissue>
    </source>
</reference>
<reference key="6">
    <citation type="journal article" date="2010" name="J. Biol. Chem.">
        <title>Altered function of the SCN1A voltage-gated sodium channel leads to gamma-aminobutyric acid-ergic (GABAergic) interneuron abnormalities.</title>
        <authorList>
            <person name="Martin M.S."/>
            <person name="Dutt K."/>
            <person name="Papale L.A."/>
            <person name="Dube C.M."/>
            <person name="Dutton S.B."/>
            <person name="de Haan G."/>
            <person name="Shankar A."/>
            <person name="Tufik S."/>
            <person name="Meisler M.H."/>
            <person name="Baram T.Z."/>
            <person name="Goldin A.L."/>
            <person name="Escayg A."/>
        </authorList>
    </citation>
    <scope>MUTAGENESIS OF ARG-1648</scope>
</reference>
<reference key="7">
    <citation type="journal article" date="2012" name="Nature">
        <title>Autistic-like behaviour in Scn1a+/- mice and rescue by enhanced GABA-mediated neurotransmission.</title>
        <authorList>
            <person name="Han S."/>
            <person name="Tai C."/>
            <person name="Westenbroek R.E."/>
            <person name="Yu F.H."/>
            <person name="Cheah C.S."/>
            <person name="Potter G.B."/>
            <person name="Rubenstein J.L."/>
            <person name="Scheuer T."/>
            <person name="de la Iglesia H.O."/>
            <person name="Catterall W.A."/>
        </authorList>
    </citation>
    <scope>FUNCTION</scope>
    <scope>DISRUPTION PHENOTYPE</scope>
</reference>
<reference key="8">
    <citation type="journal article" date="2012" name="Proc. Natl. Acad. Sci. U.S.A.">
        <title>Specific deletion of NaV1.1 sodium channels in inhibitory interneurons causes seizures and premature death in a mouse model of Dravet syndrome.</title>
        <authorList>
            <person name="Cheah C.S."/>
            <person name="Yu F.H."/>
            <person name="Westenbroek R.E."/>
            <person name="Kalume F.K."/>
            <person name="Oakley J.C."/>
            <person name="Potter G.B."/>
            <person name="Rubenstein J.L."/>
            <person name="Catterall W.A."/>
        </authorList>
    </citation>
    <scope>DISRUPTION PHENOTYPE</scope>
</reference>
<reference key="9">
    <citation type="journal article" date="2016" name="Genes Brain Behav.">
        <title>Scn1a dysfunction alters behavior but not the effect of stress on seizure response.</title>
        <authorList>
            <person name="Sawyer N.T."/>
            <person name="Helvig A.W."/>
            <person name="Makinson C.D."/>
            <person name="Decker M.J."/>
            <person name="Neigh G.N."/>
            <person name="Escayg A."/>
        </authorList>
    </citation>
    <scope>MUTAGENESIS OF ARG-1648</scope>
</reference>
<reference key="10">
    <citation type="journal article" date="2016" name="Nature">
        <title>Selective spider toxins reveal a role for the Nav1.1 channel in mechanical pain.</title>
        <authorList>
            <person name="Osteen J.D."/>
            <person name="Herzig V."/>
            <person name="Gilchrist J."/>
            <person name="Emrick J.J."/>
            <person name="Zhang C."/>
            <person name="Wang X."/>
            <person name="Castro J."/>
            <person name="Garcia-Caraballo S."/>
            <person name="Grundy L."/>
            <person name="Rychkov G.Y."/>
            <person name="Weyer A.D."/>
            <person name="Dekan Z."/>
            <person name="Undheim E.A."/>
            <person name="Alewood P."/>
            <person name="Stucky C.L."/>
            <person name="Brierley S.M."/>
            <person name="Basbaum A.I."/>
            <person name="Bosmans F."/>
            <person name="King G.F."/>
            <person name="Julius D."/>
        </authorList>
    </citation>
    <scope>FUNCTION</scope>
    <scope>TRANSPORTER ACTIVITY</scope>
    <scope>ACTIVITY REGULATION</scope>
    <scope>SUBCELLULAR LOCATION</scope>
    <scope>DOMAIN</scope>
    <scope>TISSUE SPECIFICITY</scope>
</reference>
<evidence type="ECO:0000250" key="1">
    <source>
        <dbReference type="UniProtKB" id="P04774"/>
    </source>
</evidence>
<evidence type="ECO:0000250" key="2">
    <source>
        <dbReference type="UniProtKB" id="P04775"/>
    </source>
</evidence>
<evidence type="ECO:0000250" key="3">
    <source>
        <dbReference type="UniProtKB" id="P35498"/>
    </source>
</evidence>
<evidence type="ECO:0000255" key="4"/>
<evidence type="ECO:0000255" key="5">
    <source>
        <dbReference type="PROSITE-ProRule" id="PRU00116"/>
    </source>
</evidence>
<evidence type="ECO:0000256" key="6">
    <source>
        <dbReference type="SAM" id="MobiDB-lite"/>
    </source>
</evidence>
<evidence type="ECO:0000269" key="7">
    <source>
    </source>
</evidence>
<evidence type="ECO:0000269" key="8">
    <source>
    </source>
</evidence>
<evidence type="ECO:0000269" key="9">
    <source>
    </source>
</evidence>
<evidence type="ECO:0000269" key="10">
    <source>
    </source>
</evidence>
<evidence type="ECO:0000269" key="11">
    <source>
    </source>
</evidence>
<evidence type="ECO:0000269" key="12">
    <source>
    </source>
</evidence>
<evidence type="ECO:0000269" key="13">
    <source>
    </source>
</evidence>
<evidence type="ECO:0000305" key="14"/>
<evidence type="ECO:0000312" key="15">
    <source>
        <dbReference type="MGI" id="MGI:98246"/>
    </source>
</evidence>
<evidence type="ECO:0007744" key="16">
    <source>
    </source>
</evidence>